<name>CASP7_SOYBN</name>
<protein>
    <recommendedName>
        <fullName>CASP-like protein 7</fullName>
        <shortName>GmCASP7</shortName>
    </recommendedName>
</protein>
<feature type="chain" id="PRO_0000391513" description="CASP-like protein 7">
    <location>
        <begin position="1"/>
        <end position="186"/>
    </location>
</feature>
<feature type="topological domain" description="Cytoplasmic" evidence="2">
    <location>
        <begin position="1"/>
        <end position="26"/>
    </location>
</feature>
<feature type="transmembrane region" description="Helical" evidence="2">
    <location>
        <begin position="27"/>
        <end position="47"/>
    </location>
</feature>
<feature type="topological domain" description="Extracellular" evidence="2">
    <location>
        <begin position="48"/>
        <end position="72"/>
    </location>
</feature>
<feature type="transmembrane region" description="Helical" evidence="2">
    <location>
        <begin position="73"/>
        <end position="93"/>
    </location>
</feature>
<feature type="topological domain" description="Cytoplasmic" evidence="2">
    <location>
        <begin position="94"/>
        <end position="107"/>
    </location>
</feature>
<feature type="transmembrane region" description="Helical" evidence="2">
    <location>
        <begin position="108"/>
        <end position="128"/>
    </location>
</feature>
<feature type="topological domain" description="Extracellular" evidence="2">
    <location>
        <begin position="129"/>
        <end position="162"/>
    </location>
</feature>
<feature type="transmembrane region" description="Helical" evidence="2">
    <location>
        <begin position="163"/>
        <end position="183"/>
    </location>
</feature>
<feature type="topological domain" description="Cytoplasmic" evidence="2">
    <location>
        <begin position="184"/>
        <end position="186"/>
    </location>
</feature>
<feature type="glycosylation site" description="N-linked (GlcNAc...) asparagine" evidence="2">
    <location>
        <position position="51"/>
    </location>
</feature>
<reference key="1">
    <citation type="submission" date="2009-08" db="EMBL/GenBank/DDBJ databases">
        <authorList>
            <person name="Cheung F."/>
            <person name="Xiao Y."/>
            <person name="Chan A."/>
            <person name="Moskal W."/>
            <person name="Town C.D."/>
        </authorList>
    </citation>
    <scope>NUCLEOTIDE SEQUENCE [LARGE SCALE MRNA]</scope>
</reference>
<reference key="2">
    <citation type="journal article" date="2014" name="Plant Physiol.">
        <title>Functional and evolutionary analysis of the CASPARIAN STRIP MEMBRANE DOMAIN PROTEIN family.</title>
        <authorList>
            <person name="Roppolo D."/>
            <person name="Boeckmann B."/>
            <person name="Pfister A."/>
            <person name="Boutet E."/>
            <person name="Rubio M.C."/>
            <person name="Denervaud-Tendon V."/>
            <person name="Vermeer J.E."/>
            <person name="Gheyselinck J."/>
            <person name="Xenarios I."/>
            <person name="Geldner N."/>
        </authorList>
    </citation>
    <scope>GENE FAMILY</scope>
    <scope>NOMENCLATURE</scope>
</reference>
<sequence length="186" mass="19872">MKGGSIEAGEVSKDASPRKGVARGLSIMDFILRIIAAVATLGSALAMGTTNETLPFATQFIKFRAEFDDLPSLVFFVMANAVVCGYLVLSLMISVFHILRSTPVKSRILLVALDTVMLSLVTASASAATSIVYIAHNGNTGANWFAICQQYNNFCERISGSLIGSYIAVALFIILIMLSLVAISRN</sequence>
<organism>
    <name type="scientific">Glycine max</name>
    <name type="common">Soybean</name>
    <name type="synonym">Glycine hispida</name>
    <dbReference type="NCBI Taxonomy" id="3847"/>
    <lineage>
        <taxon>Eukaryota</taxon>
        <taxon>Viridiplantae</taxon>
        <taxon>Streptophyta</taxon>
        <taxon>Embryophyta</taxon>
        <taxon>Tracheophyta</taxon>
        <taxon>Spermatophyta</taxon>
        <taxon>Magnoliopsida</taxon>
        <taxon>eudicotyledons</taxon>
        <taxon>Gunneridae</taxon>
        <taxon>Pentapetalae</taxon>
        <taxon>rosids</taxon>
        <taxon>fabids</taxon>
        <taxon>Fabales</taxon>
        <taxon>Fabaceae</taxon>
        <taxon>Papilionoideae</taxon>
        <taxon>50 kb inversion clade</taxon>
        <taxon>NPAAA clade</taxon>
        <taxon>indigoferoid/millettioid clade</taxon>
        <taxon>Phaseoleae</taxon>
        <taxon>Glycine</taxon>
        <taxon>Glycine subgen. Soja</taxon>
    </lineage>
</organism>
<accession>C6T1G0</accession>
<proteinExistence type="evidence at transcript level"/>
<keyword id="KW-1003">Cell membrane</keyword>
<keyword id="KW-0961">Cell wall biogenesis/degradation</keyword>
<keyword id="KW-0325">Glycoprotein</keyword>
<keyword id="KW-0472">Membrane</keyword>
<keyword id="KW-1185">Reference proteome</keyword>
<keyword id="KW-0812">Transmembrane</keyword>
<keyword id="KW-1133">Transmembrane helix</keyword>
<comment type="function">
    <text evidence="1">Regulates membrane-cell wall junctions and localized cell wall deposition. Required for establishment of the Casparian strip membrane domain (CSD) and the subsequent formation of Casparian strips, a cell wall modification of the root endodermis that determines an apoplastic barrier between the intraorganismal apoplasm and the extraorganismal apoplasm and prevents lateral diffusion (By similarity).</text>
</comment>
<comment type="subunit">
    <text evidence="1">Homodimer and heterodimers.</text>
</comment>
<comment type="subcellular location">
    <subcellularLocation>
        <location evidence="1">Cell membrane</location>
        <topology evidence="1">Multi-pass membrane protein</topology>
    </subcellularLocation>
    <text evidence="1">Very restricted localization following a belt shape within the plasma membrane which coincides with the position of the Casparian strip membrane domain in the root endodermis.</text>
</comment>
<comment type="similarity">
    <text evidence="3">Belongs to the Casparian strip membrane proteins (CASP) family.</text>
</comment>
<dbReference type="EMBL" id="BT091266">
    <property type="protein sequence ID" value="ACU15399.1"/>
    <property type="molecule type" value="mRNA"/>
</dbReference>
<dbReference type="RefSeq" id="NP_001236648.1">
    <property type="nucleotide sequence ID" value="NM_001249719.2"/>
</dbReference>
<dbReference type="SMR" id="C6T1G0"/>
<dbReference type="FunCoup" id="C6T1G0">
    <property type="interactions" value="11"/>
</dbReference>
<dbReference type="PaxDb" id="3847-GLYMA02G12200.1"/>
<dbReference type="GeneID" id="100500346"/>
<dbReference type="KEGG" id="gmx:100500346"/>
<dbReference type="eggNOG" id="ENOG502RXTK">
    <property type="taxonomic scope" value="Eukaryota"/>
</dbReference>
<dbReference type="InParanoid" id="C6T1G0"/>
<dbReference type="OrthoDB" id="753675at2759"/>
<dbReference type="Proteomes" id="UP000008827">
    <property type="component" value="Unplaced"/>
</dbReference>
<dbReference type="GO" id="GO:0005886">
    <property type="term" value="C:plasma membrane"/>
    <property type="evidence" value="ECO:0000318"/>
    <property type="project" value="GO_Central"/>
</dbReference>
<dbReference type="GO" id="GO:0042545">
    <property type="term" value="P:cell wall modification"/>
    <property type="evidence" value="ECO:0000318"/>
    <property type="project" value="GO_Central"/>
</dbReference>
<dbReference type="GO" id="GO:0007043">
    <property type="term" value="P:cell-cell junction assembly"/>
    <property type="evidence" value="ECO:0000318"/>
    <property type="project" value="GO_Central"/>
</dbReference>
<dbReference type="InterPro" id="IPR006459">
    <property type="entry name" value="CASP/CASPL"/>
</dbReference>
<dbReference type="InterPro" id="IPR006702">
    <property type="entry name" value="CASP_dom"/>
</dbReference>
<dbReference type="InterPro" id="IPR044173">
    <property type="entry name" value="CASPL"/>
</dbReference>
<dbReference type="NCBIfam" id="TIGR01569">
    <property type="entry name" value="A_tha_TIGR01569"/>
    <property type="match status" value="1"/>
</dbReference>
<dbReference type="PANTHER" id="PTHR36488:SF12">
    <property type="entry name" value="CASP-LIKE PROTEIN"/>
    <property type="match status" value="1"/>
</dbReference>
<dbReference type="PANTHER" id="PTHR36488">
    <property type="entry name" value="CASP-LIKE PROTEIN 1U1"/>
    <property type="match status" value="1"/>
</dbReference>
<dbReference type="Pfam" id="PF04535">
    <property type="entry name" value="CASP_dom"/>
    <property type="match status" value="1"/>
</dbReference>
<evidence type="ECO:0000250" key="1"/>
<evidence type="ECO:0000255" key="2"/>
<evidence type="ECO:0000305" key="3"/>